<keyword id="KW-0012">Acyltransferase</keyword>
<keyword id="KW-0997">Cell inner membrane</keyword>
<keyword id="KW-1003">Cell membrane</keyword>
<keyword id="KW-0444">Lipid biosynthesis</keyword>
<keyword id="KW-0443">Lipid metabolism</keyword>
<keyword id="KW-0472">Membrane</keyword>
<keyword id="KW-0594">Phospholipid biosynthesis</keyword>
<keyword id="KW-1208">Phospholipid metabolism</keyword>
<keyword id="KW-1185">Reference proteome</keyword>
<keyword id="KW-0808">Transferase</keyword>
<sequence length="811" mass="92931">MSMLLNLYRKALNLPLSLLVKTRSIPTDPVNELGLKLDQPIVYVLPYTSQTDLLILQKNCQALNLPDPLVNNDIQGVSLSRFVFLDEGRRFFKSKGAKSETELVFYRYLDLNRNDEQLDIQVVPVSVLWGRAPGKEKGLPVLRLLGTFQRLVTMLWFGRDNFIRFSQAVSLRYMITNHGTDENLAQKLARVAKMHFAKQRYSATGPQLPDRQAMFNKLLQSPAILAAIEDEAKKPKSSLEKARKEAEKILDEIAANVRHDSLRSADRVLSWLWNKLYQGINVQYAERVRKLALEGHELVYVPCHRSHMDYLLLSYILYHQGLVPPHIAAGINLNFWPAGPIFRSWGAFFIRRTFKGNRLYSTIFREYLAELFYRGYSVEYFIEGGRSRTGRLLDPKTGMMSMTLQALQRGLTRPISIVPVYIGYEHVLEVDTYAKELRGAEKEKENAGLVLRVIKKLKKLGQGYVNFGEPIPLNHYLNQYFPEWKEPLTDENGRPKWLNSAVEAVSKQVMVHINNAVAVNAKNLIGSVLLASRQRSLTREQLIEQVESYMQLFKNVPYTAEVTLPTDTAEAMLDHVINLPRSGVISEKDNFGEIIRLDRQSAVLMTYYRNNIQHLFVLPSLVASIVLHHETVSKDLIIQSVNRIYPFLQAELFMHFKAEEVRGHIEAILAEFVAQNLIKNESDMFVINRQRIRSLQLHSSGVRELLQRYYISLSILIEQPEISRNELEQESRSIAQRLSVLHGINAPEFFDKALFSTFSATLKEQGYFDEEGDTIVSKVQSTEELIRGLISVEIQHTVQGAMVKLEEVNNI</sequence>
<organism>
    <name type="scientific">Glaesserella parasuis serovar 5 (strain SH0165)</name>
    <name type="common">Haemophilus parasuis</name>
    <dbReference type="NCBI Taxonomy" id="557723"/>
    <lineage>
        <taxon>Bacteria</taxon>
        <taxon>Pseudomonadati</taxon>
        <taxon>Pseudomonadota</taxon>
        <taxon>Gammaproteobacteria</taxon>
        <taxon>Pasteurellales</taxon>
        <taxon>Pasteurellaceae</taxon>
        <taxon>Glaesserella</taxon>
    </lineage>
</organism>
<proteinExistence type="inferred from homology"/>
<accession>B8F321</accession>
<dbReference type="EC" id="2.3.1.15" evidence="1"/>
<dbReference type="EMBL" id="CP001321">
    <property type="protein sequence ID" value="ACL31723.1"/>
    <property type="molecule type" value="Genomic_DNA"/>
</dbReference>
<dbReference type="RefSeq" id="WP_012621501.1">
    <property type="nucleotide sequence ID" value="NC_011852.1"/>
</dbReference>
<dbReference type="SMR" id="B8F321"/>
<dbReference type="STRING" id="557723.HAPS_0018"/>
<dbReference type="KEGG" id="hap:HAPS_0018"/>
<dbReference type="PATRIC" id="fig|557723.8.peg.20"/>
<dbReference type="HOGENOM" id="CLU_015407_0_0_6"/>
<dbReference type="UniPathway" id="UPA00557">
    <property type="reaction ID" value="UER00612"/>
</dbReference>
<dbReference type="Proteomes" id="UP000006743">
    <property type="component" value="Chromosome"/>
</dbReference>
<dbReference type="GO" id="GO:0005886">
    <property type="term" value="C:plasma membrane"/>
    <property type="evidence" value="ECO:0007669"/>
    <property type="project" value="UniProtKB-SubCell"/>
</dbReference>
<dbReference type="GO" id="GO:0004366">
    <property type="term" value="F:glycerol-3-phosphate O-acyltransferase activity"/>
    <property type="evidence" value="ECO:0007669"/>
    <property type="project" value="UniProtKB-UniRule"/>
</dbReference>
<dbReference type="GO" id="GO:0016024">
    <property type="term" value="P:CDP-diacylglycerol biosynthetic process"/>
    <property type="evidence" value="ECO:0007669"/>
    <property type="project" value="UniProtKB-UniRule"/>
</dbReference>
<dbReference type="GO" id="GO:0006631">
    <property type="term" value="P:fatty acid metabolic process"/>
    <property type="evidence" value="ECO:0007669"/>
    <property type="project" value="TreeGrafter"/>
</dbReference>
<dbReference type="CDD" id="cd07993">
    <property type="entry name" value="LPLAT_DHAPAT-like"/>
    <property type="match status" value="1"/>
</dbReference>
<dbReference type="HAMAP" id="MF_00393">
    <property type="entry name" value="Glyc3P_acyltrans"/>
    <property type="match status" value="1"/>
</dbReference>
<dbReference type="InterPro" id="IPR022284">
    <property type="entry name" value="GPAT/DHAPAT"/>
</dbReference>
<dbReference type="InterPro" id="IPR045520">
    <property type="entry name" value="GPAT/DHAPAT_C"/>
</dbReference>
<dbReference type="InterPro" id="IPR041728">
    <property type="entry name" value="GPAT/DHAPAT_LPLAT"/>
</dbReference>
<dbReference type="InterPro" id="IPR028354">
    <property type="entry name" value="GPAT_PlsB"/>
</dbReference>
<dbReference type="InterPro" id="IPR002123">
    <property type="entry name" value="Plipid/glycerol_acylTrfase"/>
</dbReference>
<dbReference type="NCBIfam" id="TIGR03703">
    <property type="entry name" value="plsB"/>
    <property type="match status" value="1"/>
</dbReference>
<dbReference type="NCBIfam" id="NF003441">
    <property type="entry name" value="PRK04974.1"/>
    <property type="match status" value="1"/>
</dbReference>
<dbReference type="PANTHER" id="PTHR12563:SF17">
    <property type="entry name" value="DIHYDROXYACETONE PHOSPHATE ACYLTRANSFERASE"/>
    <property type="match status" value="1"/>
</dbReference>
<dbReference type="PANTHER" id="PTHR12563">
    <property type="entry name" value="GLYCEROL-3-PHOSPHATE ACYLTRANSFERASE"/>
    <property type="match status" value="1"/>
</dbReference>
<dbReference type="Pfam" id="PF01553">
    <property type="entry name" value="Acyltransferase"/>
    <property type="match status" value="1"/>
</dbReference>
<dbReference type="Pfam" id="PF19277">
    <property type="entry name" value="GPAT_C"/>
    <property type="match status" value="1"/>
</dbReference>
<dbReference type="PIRSF" id="PIRSF500064">
    <property type="entry name" value="GPAT"/>
    <property type="match status" value="1"/>
</dbReference>
<dbReference type="PIRSF" id="PIRSF000437">
    <property type="entry name" value="GPAT_DHAPAT"/>
    <property type="match status" value="1"/>
</dbReference>
<dbReference type="SMART" id="SM00563">
    <property type="entry name" value="PlsC"/>
    <property type="match status" value="1"/>
</dbReference>
<dbReference type="SUPFAM" id="SSF69593">
    <property type="entry name" value="Glycerol-3-phosphate (1)-acyltransferase"/>
    <property type="match status" value="1"/>
</dbReference>
<feature type="chain" id="PRO_1000192405" description="Glycerol-3-phosphate acyltransferase">
    <location>
        <begin position="1"/>
        <end position="811"/>
    </location>
</feature>
<feature type="short sequence motif" description="HXXXXD motif">
    <location>
        <begin position="303"/>
        <end position="308"/>
    </location>
</feature>
<evidence type="ECO:0000255" key="1">
    <source>
        <dbReference type="HAMAP-Rule" id="MF_00393"/>
    </source>
</evidence>
<comment type="catalytic activity">
    <reaction evidence="1">
        <text>sn-glycerol 3-phosphate + an acyl-CoA = a 1-acyl-sn-glycero-3-phosphate + CoA</text>
        <dbReference type="Rhea" id="RHEA:15325"/>
        <dbReference type="ChEBI" id="CHEBI:57287"/>
        <dbReference type="ChEBI" id="CHEBI:57597"/>
        <dbReference type="ChEBI" id="CHEBI:57970"/>
        <dbReference type="ChEBI" id="CHEBI:58342"/>
        <dbReference type="EC" id="2.3.1.15"/>
    </reaction>
</comment>
<comment type="pathway">
    <text evidence="1">Phospholipid metabolism; CDP-diacylglycerol biosynthesis; CDP-diacylglycerol from sn-glycerol 3-phosphate: step 1/3.</text>
</comment>
<comment type="subcellular location">
    <subcellularLocation>
        <location evidence="1">Cell inner membrane</location>
        <topology evidence="1">Peripheral membrane protein</topology>
        <orientation evidence="1">Cytoplasmic side</orientation>
    </subcellularLocation>
</comment>
<comment type="domain">
    <text evidence="1">The HXXXXD motif is essential for acyltransferase activity and may constitute the binding site for the phosphate moiety of the glycerol-3-phosphate.</text>
</comment>
<comment type="similarity">
    <text evidence="1">Belongs to the GPAT/DAPAT family.</text>
</comment>
<reference key="1">
    <citation type="journal article" date="2009" name="J. Bacteriol.">
        <title>Complete genome sequence of Haemophilus parasuis SH0165.</title>
        <authorList>
            <person name="Yue M."/>
            <person name="Yang F."/>
            <person name="Yang J."/>
            <person name="Bei W."/>
            <person name="Cai X."/>
            <person name="Chen L."/>
            <person name="Dong J."/>
            <person name="Zhou R."/>
            <person name="Jin M."/>
            <person name="Jin Q."/>
            <person name="Chen H."/>
        </authorList>
    </citation>
    <scope>NUCLEOTIDE SEQUENCE [LARGE SCALE GENOMIC DNA]</scope>
    <source>
        <strain>SH0165</strain>
    </source>
</reference>
<protein>
    <recommendedName>
        <fullName evidence="1">Glycerol-3-phosphate acyltransferase</fullName>
        <shortName evidence="1">GPAT</shortName>
        <ecNumber evidence="1">2.3.1.15</ecNumber>
    </recommendedName>
</protein>
<gene>
    <name evidence="1" type="primary">plsB</name>
    <name type="ordered locus">HAPS_0018</name>
</gene>
<name>PLSB_GLAP5</name>